<sequence>MRECISIHVGQAGVQIGNACWELYCLEHGIQPDGQMPSDKTIGGGDDSFNTFFSETGAGKHVPRAVFVDLEPTVVDEVRTGTYRQLFHPEQLITGKEDAASNYARGHYTIGKEIVDLVLDRIRKLADLCTGLQGFLIFHSFGGGTGSGFASLLMERLSVDYSKKSKLEFAIYPAPQVSTAVVEPYNSILTTHTTLEHSDCAFMVDNEAIYDICRRNLDIERPTYTNLNRLIGQIVSSITASLRFDGALNVDLTEFQTNLVPYPRIHFPLATYAPVISAEKAYHEQLSVAEITNACFEPANQMVKCDPRHGKYMACCMLYRGDVVPKDVNAAIATIKTKRTIQFVDWCPTGFKVGINYQPPTVVPGGDLAKVQRAVCMLSNTTAIAEAWARLVHKFDLMYAKWAFVHWYVGEGMEEGEFSEAREDLAALEKDCEEVGVDSVEAEAEEGEAY</sequence>
<organism>
    <name type="scientific">Homo sapiens</name>
    <name type="common">Human</name>
    <dbReference type="NCBI Taxonomy" id="9606"/>
    <lineage>
        <taxon>Eukaryota</taxon>
        <taxon>Metazoa</taxon>
        <taxon>Chordata</taxon>
        <taxon>Craniata</taxon>
        <taxon>Vertebrata</taxon>
        <taxon>Euteleostomi</taxon>
        <taxon>Mammalia</taxon>
        <taxon>Eutheria</taxon>
        <taxon>Euarchontoglires</taxon>
        <taxon>Primates</taxon>
        <taxon>Haplorrhini</taxon>
        <taxon>Catarrhini</taxon>
        <taxon>Hominidae</taxon>
        <taxon>Homo</taxon>
    </lineage>
</organism>
<gene>
    <name type="primary">TUBA3E</name>
</gene>
<dbReference type="EC" id="3.6.5.-" evidence="4"/>
<dbReference type="EMBL" id="AC018804">
    <property type="status" value="NOT_ANNOTATED_CDS"/>
    <property type="molecule type" value="Genomic_DNA"/>
</dbReference>
<dbReference type="EMBL" id="BC057811">
    <property type="protein sequence ID" value="AAH57811.1"/>
    <property type="molecule type" value="mRNA"/>
</dbReference>
<dbReference type="CCDS" id="CCDS2158.1"/>
<dbReference type="RefSeq" id="NP_997195.2">
    <property type="nucleotide sequence ID" value="NM_207312.3"/>
</dbReference>
<dbReference type="SMR" id="Q6PEY2"/>
<dbReference type="BioGRID" id="125199">
    <property type="interactions" value="45"/>
</dbReference>
<dbReference type="FunCoup" id="Q6PEY2">
    <property type="interactions" value="609"/>
</dbReference>
<dbReference type="IntAct" id="Q6PEY2">
    <property type="interactions" value="24"/>
</dbReference>
<dbReference type="MINT" id="Q6PEY2"/>
<dbReference type="STRING" id="9606.ENSP00000318197"/>
<dbReference type="BindingDB" id="Q6PEY2"/>
<dbReference type="ChEMBL" id="CHEMBL2095182"/>
<dbReference type="DrugBank" id="DB05147">
    <property type="generic name" value="CYT997"/>
</dbReference>
<dbReference type="DrugCentral" id="Q6PEY2"/>
<dbReference type="GlyGen" id="Q6PEY2">
    <property type="glycosylation" value="1 site, 1 O-linked glycan (1 site)"/>
</dbReference>
<dbReference type="iPTMnet" id="Q6PEY2"/>
<dbReference type="PhosphoSitePlus" id="Q6PEY2"/>
<dbReference type="SwissPalm" id="Q6PEY2"/>
<dbReference type="BioMuta" id="TUBA3E"/>
<dbReference type="DMDM" id="224471855"/>
<dbReference type="jPOST" id="Q6PEY2"/>
<dbReference type="MassIVE" id="Q6PEY2"/>
<dbReference type="PaxDb" id="9606-ENSP00000318197"/>
<dbReference type="PeptideAtlas" id="Q6PEY2"/>
<dbReference type="PRIDE" id="Q6PEY2"/>
<dbReference type="ProteomicsDB" id="67089"/>
<dbReference type="Pumba" id="Q6PEY2"/>
<dbReference type="TopDownProteomics" id="Q6PEY2"/>
<dbReference type="Antibodypedia" id="58057">
    <property type="antibodies" value="109 antibodies from 14 providers"/>
</dbReference>
<dbReference type="DNASU" id="112714"/>
<dbReference type="Ensembl" id="ENST00000312988.9">
    <property type="protein sequence ID" value="ENSP00000318197.7"/>
    <property type="gene ID" value="ENSG00000152086.9"/>
</dbReference>
<dbReference type="GeneID" id="112714"/>
<dbReference type="KEGG" id="hsa:112714"/>
<dbReference type="MANE-Select" id="ENST00000312988.9">
    <property type="protein sequence ID" value="ENSP00000318197.7"/>
    <property type="RefSeq nucleotide sequence ID" value="NM_207312.3"/>
    <property type="RefSeq protein sequence ID" value="NP_997195.2"/>
</dbReference>
<dbReference type="UCSC" id="uc002tqv.4">
    <property type="organism name" value="human"/>
</dbReference>
<dbReference type="AGR" id="HGNC:20765"/>
<dbReference type="CTD" id="112714"/>
<dbReference type="DisGeNET" id="112714"/>
<dbReference type="GeneCards" id="TUBA3E"/>
<dbReference type="HGNC" id="HGNC:20765">
    <property type="gene designation" value="TUBA3E"/>
</dbReference>
<dbReference type="HPA" id="ENSG00000152086">
    <property type="expression patterns" value="Group enriched (heart muscle, testis)"/>
</dbReference>
<dbReference type="MalaCards" id="TUBA3E"/>
<dbReference type="MIM" id="619918">
    <property type="type" value="gene"/>
</dbReference>
<dbReference type="neXtProt" id="NX_Q6PEY2"/>
<dbReference type="OpenTargets" id="ENSG00000152086"/>
<dbReference type="PharmGKB" id="PA162407376"/>
<dbReference type="VEuPathDB" id="HostDB:ENSG00000152086"/>
<dbReference type="eggNOG" id="KOG1376">
    <property type="taxonomic scope" value="Eukaryota"/>
</dbReference>
<dbReference type="GeneTree" id="ENSGT00950000182825"/>
<dbReference type="HOGENOM" id="CLU_015718_0_0_1"/>
<dbReference type="InParanoid" id="Q6PEY2"/>
<dbReference type="OrthoDB" id="9515037at2759"/>
<dbReference type="PAN-GO" id="Q6PEY2">
    <property type="GO annotations" value="6 GO annotations based on evolutionary models"/>
</dbReference>
<dbReference type="PhylomeDB" id="Q6PEY2"/>
<dbReference type="TreeFam" id="TF300314"/>
<dbReference type="PathwayCommons" id="Q6PEY2"/>
<dbReference type="Reactome" id="R-HSA-1445148">
    <property type="pathway name" value="Translocation of SLC2A4 (GLUT4) to the plasma membrane"/>
</dbReference>
<dbReference type="Reactome" id="R-HSA-190840">
    <property type="pathway name" value="Microtubule-dependent trafficking of connexons from Golgi to the plasma membrane"/>
</dbReference>
<dbReference type="Reactome" id="R-HSA-190861">
    <property type="pathway name" value="Gap junction assembly"/>
</dbReference>
<dbReference type="Reactome" id="R-HSA-2132295">
    <property type="pathway name" value="MHC class II antigen presentation"/>
</dbReference>
<dbReference type="Reactome" id="R-HSA-2467813">
    <property type="pathway name" value="Separation of Sister Chromatids"/>
</dbReference>
<dbReference type="Reactome" id="R-HSA-2500257">
    <property type="pathway name" value="Resolution of Sister Chromatid Cohesion"/>
</dbReference>
<dbReference type="Reactome" id="R-HSA-3371497">
    <property type="pathway name" value="HSP90 chaperone cycle for steroid hormone receptors (SHR) in the presence of ligand"/>
</dbReference>
<dbReference type="Reactome" id="R-HSA-380320">
    <property type="pathway name" value="Recruitment of NuMA to mitotic centrosomes"/>
</dbReference>
<dbReference type="Reactome" id="R-HSA-389960">
    <property type="pathway name" value="Formation of tubulin folding intermediates by CCT/TriC"/>
</dbReference>
<dbReference type="Reactome" id="R-HSA-389977">
    <property type="pathway name" value="Post-chaperonin tubulin folding pathway"/>
</dbReference>
<dbReference type="Reactome" id="R-HSA-437239">
    <property type="pathway name" value="Recycling pathway of L1"/>
</dbReference>
<dbReference type="Reactome" id="R-HSA-5617833">
    <property type="pathway name" value="Cilium Assembly"/>
</dbReference>
<dbReference type="Reactome" id="R-HSA-5626467">
    <property type="pathway name" value="RHO GTPases activate IQGAPs"/>
</dbReference>
<dbReference type="Reactome" id="R-HSA-5663220">
    <property type="pathway name" value="RHO GTPases Activate Formins"/>
</dbReference>
<dbReference type="Reactome" id="R-HSA-6807878">
    <property type="pathway name" value="COPI-mediated anterograde transport"/>
</dbReference>
<dbReference type="Reactome" id="R-HSA-6811434">
    <property type="pathway name" value="COPI-dependent Golgi-to-ER retrograde traffic"/>
</dbReference>
<dbReference type="Reactome" id="R-HSA-6811436">
    <property type="pathway name" value="COPI-independent Golgi-to-ER retrograde traffic"/>
</dbReference>
<dbReference type="Reactome" id="R-HSA-68877">
    <property type="pathway name" value="Mitotic Prometaphase"/>
</dbReference>
<dbReference type="Reactome" id="R-HSA-8852276">
    <property type="pathway name" value="The role of GTSE1 in G2/M progression after G2 checkpoint"/>
</dbReference>
<dbReference type="Reactome" id="R-HSA-8955332">
    <property type="pathway name" value="Carboxyterminal post-translational modifications of tubulin"/>
</dbReference>
<dbReference type="Reactome" id="R-HSA-9609690">
    <property type="pathway name" value="HCMV Early Events"/>
</dbReference>
<dbReference type="Reactome" id="R-HSA-9609736">
    <property type="pathway name" value="Assembly and cell surface presentation of NMDA receptors"/>
</dbReference>
<dbReference type="Reactome" id="R-HSA-9619483">
    <property type="pathway name" value="Activation of AMPK downstream of NMDARs"/>
</dbReference>
<dbReference type="Reactome" id="R-HSA-9646399">
    <property type="pathway name" value="Aggrephagy"/>
</dbReference>
<dbReference type="Reactome" id="R-HSA-9648025">
    <property type="pathway name" value="EML4 and NUDC in mitotic spindle formation"/>
</dbReference>
<dbReference type="Reactome" id="R-HSA-9668328">
    <property type="pathway name" value="Sealing of the nuclear envelope (NE) by ESCRT-III"/>
</dbReference>
<dbReference type="Reactome" id="R-HSA-983189">
    <property type="pathway name" value="Kinesins"/>
</dbReference>
<dbReference type="Reactome" id="R-HSA-9833482">
    <property type="pathway name" value="PKR-mediated signaling"/>
</dbReference>
<dbReference type="SignaLink" id="Q6PEY2"/>
<dbReference type="SIGNOR" id="Q6PEY2"/>
<dbReference type="BioGRID-ORCS" id="112714">
    <property type="hits" value="14 hits in 1046 CRISPR screens"/>
</dbReference>
<dbReference type="CD-CODE" id="91857CE7">
    <property type="entry name" value="Nucleolus"/>
</dbReference>
<dbReference type="GenomeRNAi" id="112714"/>
<dbReference type="Pharos" id="Q6PEY2">
    <property type="development level" value="Tchem"/>
</dbReference>
<dbReference type="PRO" id="PR:Q6PEY2"/>
<dbReference type="Proteomes" id="UP000005640">
    <property type="component" value="Chromosome 2"/>
</dbReference>
<dbReference type="RNAct" id="Q6PEY2">
    <property type="molecule type" value="protein"/>
</dbReference>
<dbReference type="Bgee" id="ENSG00000152086">
    <property type="expression patterns" value="Expressed in right testis and 54 other cell types or tissues"/>
</dbReference>
<dbReference type="GO" id="GO:0005929">
    <property type="term" value="C:cilium"/>
    <property type="evidence" value="ECO:0000314"/>
    <property type="project" value="HPA"/>
</dbReference>
<dbReference type="GO" id="GO:0005737">
    <property type="term" value="C:cytoplasm"/>
    <property type="evidence" value="ECO:0000318"/>
    <property type="project" value="GO_Central"/>
</dbReference>
<dbReference type="GO" id="GO:0005874">
    <property type="term" value="C:microtubule"/>
    <property type="evidence" value="ECO:0000318"/>
    <property type="project" value="GO_Central"/>
</dbReference>
<dbReference type="GO" id="GO:0015630">
    <property type="term" value="C:microtubule cytoskeleton"/>
    <property type="evidence" value="ECO:0000314"/>
    <property type="project" value="HPA"/>
</dbReference>
<dbReference type="GO" id="GO:0005634">
    <property type="term" value="C:nucleus"/>
    <property type="evidence" value="ECO:0007005"/>
    <property type="project" value="UniProtKB"/>
</dbReference>
<dbReference type="GO" id="GO:0005525">
    <property type="term" value="F:GTP binding"/>
    <property type="evidence" value="ECO:0000318"/>
    <property type="project" value="GO_Central"/>
</dbReference>
<dbReference type="GO" id="GO:0016787">
    <property type="term" value="F:hydrolase activity"/>
    <property type="evidence" value="ECO:0007669"/>
    <property type="project" value="UniProtKB-KW"/>
</dbReference>
<dbReference type="GO" id="GO:0046872">
    <property type="term" value="F:metal ion binding"/>
    <property type="evidence" value="ECO:0007669"/>
    <property type="project" value="UniProtKB-KW"/>
</dbReference>
<dbReference type="GO" id="GO:0005200">
    <property type="term" value="F:structural constituent of cytoskeleton"/>
    <property type="evidence" value="ECO:0000318"/>
    <property type="project" value="GO_Central"/>
</dbReference>
<dbReference type="GO" id="GO:0000226">
    <property type="term" value="P:microtubule cytoskeleton organization"/>
    <property type="evidence" value="ECO:0000318"/>
    <property type="project" value="GO_Central"/>
</dbReference>
<dbReference type="GO" id="GO:0000278">
    <property type="term" value="P:mitotic cell cycle"/>
    <property type="evidence" value="ECO:0000318"/>
    <property type="project" value="GO_Central"/>
</dbReference>
<dbReference type="CDD" id="cd02186">
    <property type="entry name" value="alpha_tubulin"/>
    <property type="match status" value="1"/>
</dbReference>
<dbReference type="FunFam" id="1.10.287.600:FF:000005">
    <property type="entry name" value="Tubulin alpha chain"/>
    <property type="match status" value="1"/>
</dbReference>
<dbReference type="FunFam" id="3.30.1330.20:FF:000001">
    <property type="entry name" value="Tubulin alpha chain"/>
    <property type="match status" value="1"/>
</dbReference>
<dbReference type="FunFam" id="3.40.50.1440:FF:000002">
    <property type="entry name" value="Tubulin alpha chain"/>
    <property type="match status" value="1"/>
</dbReference>
<dbReference type="Gene3D" id="1.10.287.600">
    <property type="entry name" value="Helix hairpin bin"/>
    <property type="match status" value="1"/>
</dbReference>
<dbReference type="Gene3D" id="3.30.1330.20">
    <property type="entry name" value="Tubulin/FtsZ, C-terminal domain"/>
    <property type="match status" value="1"/>
</dbReference>
<dbReference type="Gene3D" id="3.40.50.1440">
    <property type="entry name" value="Tubulin/FtsZ, GTPase domain"/>
    <property type="match status" value="1"/>
</dbReference>
<dbReference type="InterPro" id="IPR002452">
    <property type="entry name" value="Alpha_tubulin"/>
</dbReference>
<dbReference type="InterPro" id="IPR008280">
    <property type="entry name" value="Tub_FtsZ_C"/>
</dbReference>
<dbReference type="InterPro" id="IPR000217">
    <property type="entry name" value="Tubulin"/>
</dbReference>
<dbReference type="InterPro" id="IPR037103">
    <property type="entry name" value="Tubulin/FtsZ-like_C"/>
</dbReference>
<dbReference type="InterPro" id="IPR018316">
    <property type="entry name" value="Tubulin/FtsZ_2-layer-sand-dom"/>
</dbReference>
<dbReference type="InterPro" id="IPR036525">
    <property type="entry name" value="Tubulin/FtsZ_GTPase_sf"/>
</dbReference>
<dbReference type="InterPro" id="IPR023123">
    <property type="entry name" value="Tubulin_C"/>
</dbReference>
<dbReference type="InterPro" id="IPR017975">
    <property type="entry name" value="Tubulin_CS"/>
</dbReference>
<dbReference type="InterPro" id="IPR003008">
    <property type="entry name" value="Tubulin_FtsZ_GTPase"/>
</dbReference>
<dbReference type="PANTHER" id="PTHR11588">
    <property type="entry name" value="TUBULIN"/>
    <property type="match status" value="1"/>
</dbReference>
<dbReference type="Pfam" id="PF00091">
    <property type="entry name" value="Tubulin"/>
    <property type="match status" value="1"/>
</dbReference>
<dbReference type="Pfam" id="PF03953">
    <property type="entry name" value="Tubulin_C"/>
    <property type="match status" value="1"/>
</dbReference>
<dbReference type="PRINTS" id="PR01162">
    <property type="entry name" value="ALPHATUBULIN"/>
</dbReference>
<dbReference type="PRINTS" id="PR01161">
    <property type="entry name" value="TUBULIN"/>
</dbReference>
<dbReference type="SMART" id="SM00864">
    <property type="entry name" value="Tubulin"/>
    <property type="match status" value="1"/>
</dbReference>
<dbReference type="SMART" id="SM00865">
    <property type="entry name" value="Tubulin_C"/>
    <property type="match status" value="1"/>
</dbReference>
<dbReference type="SUPFAM" id="SSF55307">
    <property type="entry name" value="Tubulin C-terminal domain-like"/>
    <property type="match status" value="1"/>
</dbReference>
<dbReference type="SUPFAM" id="SSF52490">
    <property type="entry name" value="Tubulin nucleotide-binding domain-like"/>
    <property type="match status" value="1"/>
</dbReference>
<dbReference type="PROSITE" id="PS00227">
    <property type="entry name" value="TUBULIN"/>
    <property type="match status" value="1"/>
</dbReference>
<protein>
    <recommendedName>
        <fullName>Tubulin alpha-3E chain</fullName>
        <ecNumber evidence="4">3.6.5.-</ecNumber>
    </recommendedName>
    <alternativeName>
        <fullName>Alpha-tubulin 3E</fullName>
    </alternativeName>
    <component>
        <recommendedName>
            <fullName>Detyrosinated tubulin alpha-3E chain</fullName>
        </recommendedName>
    </component>
</protein>
<accession>Q6PEY2</accession>
<reference key="1">
    <citation type="journal article" date="2005" name="Nature">
        <title>Generation and annotation of the DNA sequences of human chromosomes 2 and 4.</title>
        <authorList>
            <person name="Hillier L.W."/>
            <person name="Graves T.A."/>
            <person name="Fulton R.S."/>
            <person name="Fulton L.A."/>
            <person name="Pepin K.H."/>
            <person name="Minx P."/>
            <person name="Wagner-McPherson C."/>
            <person name="Layman D."/>
            <person name="Wylie K."/>
            <person name="Sekhon M."/>
            <person name="Becker M.C."/>
            <person name="Fewell G.A."/>
            <person name="Delehaunty K.D."/>
            <person name="Miner T.L."/>
            <person name="Nash W.E."/>
            <person name="Kremitzki C."/>
            <person name="Oddy L."/>
            <person name="Du H."/>
            <person name="Sun H."/>
            <person name="Bradshaw-Cordum H."/>
            <person name="Ali J."/>
            <person name="Carter J."/>
            <person name="Cordes M."/>
            <person name="Harris A."/>
            <person name="Isak A."/>
            <person name="van Brunt A."/>
            <person name="Nguyen C."/>
            <person name="Du F."/>
            <person name="Courtney L."/>
            <person name="Kalicki J."/>
            <person name="Ozersky P."/>
            <person name="Abbott S."/>
            <person name="Armstrong J."/>
            <person name="Belter E.A."/>
            <person name="Caruso L."/>
            <person name="Cedroni M."/>
            <person name="Cotton M."/>
            <person name="Davidson T."/>
            <person name="Desai A."/>
            <person name="Elliott G."/>
            <person name="Erb T."/>
            <person name="Fronick C."/>
            <person name="Gaige T."/>
            <person name="Haakenson W."/>
            <person name="Haglund K."/>
            <person name="Holmes A."/>
            <person name="Harkins R."/>
            <person name="Kim K."/>
            <person name="Kruchowski S.S."/>
            <person name="Strong C.M."/>
            <person name="Grewal N."/>
            <person name="Goyea E."/>
            <person name="Hou S."/>
            <person name="Levy A."/>
            <person name="Martinka S."/>
            <person name="Mead K."/>
            <person name="McLellan M.D."/>
            <person name="Meyer R."/>
            <person name="Randall-Maher J."/>
            <person name="Tomlinson C."/>
            <person name="Dauphin-Kohlberg S."/>
            <person name="Kozlowicz-Reilly A."/>
            <person name="Shah N."/>
            <person name="Swearengen-Shahid S."/>
            <person name="Snider J."/>
            <person name="Strong J.T."/>
            <person name="Thompson J."/>
            <person name="Yoakum M."/>
            <person name="Leonard S."/>
            <person name="Pearman C."/>
            <person name="Trani L."/>
            <person name="Radionenko M."/>
            <person name="Waligorski J.E."/>
            <person name="Wang C."/>
            <person name="Rock S.M."/>
            <person name="Tin-Wollam A.-M."/>
            <person name="Maupin R."/>
            <person name="Latreille P."/>
            <person name="Wendl M.C."/>
            <person name="Yang S.-P."/>
            <person name="Pohl C."/>
            <person name="Wallis J.W."/>
            <person name="Spieth J."/>
            <person name="Bieri T.A."/>
            <person name="Berkowicz N."/>
            <person name="Nelson J.O."/>
            <person name="Osborne J."/>
            <person name="Ding L."/>
            <person name="Meyer R."/>
            <person name="Sabo A."/>
            <person name="Shotland Y."/>
            <person name="Sinha P."/>
            <person name="Wohldmann P.E."/>
            <person name="Cook L.L."/>
            <person name="Hickenbotham M.T."/>
            <person name="Eldred J."/>
            <person name="Williams D."/>
            <person name="Jones T.A."/>
            <person name="She X."/>
            <person name="Ciccarelli F.D."/>
            <person name="Izaurralde E."/>
            <person name="Taylor J."/>
            <person name="Schmutz J."/>
            <person name="Myers R.M."/>
            <person name="Cox D.R."/>
            <person name="Huang X."/>
            <person name="McPherson J.D."/>
            <person name="Mardis E.R."/>
            <person name="Clifton S.W."/>
            <person name="Warren W.C."/>
            <person name="Chinwalla A.T."/>
            <person name="Eddy S.R."/>
            <person name="Marra M.A."/>
            <person name="Ovcharenko I."/>
            <person name="Furey T.S."/>
            <person name="Miller W."/>
            <person name="Eichler E.E."/>
            <person name="Bork P."/>
            <person name="Suyama M."/>
            <person name="Torrents D."/>
            <person name="Waterston R.H."/>
            <person name="Wilson R.K."/>
        </authorList>
    </citation>
    <scope>NUCLEOTIDE SEQUENCE [LARGE SCALE GENOMIC DNA]</scope>
</reference>
<reference key="2">
    <citation type="journal article" date="2004" name="Genome Res.">
        <title>The status, quality, and expansion of the NIH full-length cDNA project: the Mammalian Gene Collection (MGC).</title>
        <authorList>
            <consortium name="The MGC Project Team"/>
        </authorList>
    </citation>
    <scope>NUCLEOTIDE SEQUENCE [LARGE SCALE MRNA]</scope>
    <scope>VARIANT GLU-449</scope>
    <source>
        <tissue>Testis</tissue>
    </source>
</reference>
<reference key="3">
    <citation type="journal article" date="2009" name="Cell">
        <title>Evolutionary divergence of enzymatic mechanisms for posttranslational polyglycylation.</title>
        <authorList>
            <person name="Rogowski K."/>
            <person name="Juge F."/>
            <person name="van Dijk J."/>
            <person name="Wloga D."/>
            <person name="Strub J.-M."/>
            <person name="Levilliers N."/>
            <person name="Thomas D."/>
            <person name="Bre M.-H."/>
            <person name="Van Dorsselaer A."/>
            <person name="Gaertig J."/>
            <person name="Janke C."/>
        </authorList>
    </citation>
    <scope>GLYCYLATION</scope>
</reference>
<reference key="4">
    <citation type="journal article" date="2014" name="Cell">
        <title>Molecular basis for age-dependent microtubule acetylation by tubulin acetyltransferase.</title>
        <authorList>
            <person name="Szyk A."/>
            <person name="Deaconescu A.M."/>
            <person name="Spector J."/>
            <person name="Goodman B."/>
            <person name="Valenstein M.L."/>
            <person name="Ziolkowska N.E."/>
            <person name="Kormendi V."/>
            <person name="Grigorieff N."/>
            <person name="Roll-Mecak A."/>
        </authorList>
    </citation>
    <scope>ACETYLATION AT LYS-40</scope>
</reference>
<reference key="5">
    <citation type="journal article" date="2015" name="Science">
        <title>Mitosis. Microtubule detyrosination guides chromosomes during mitosis.</title>
        <authorList>
            <person name="Barisic M."/>
            <person name="Silva e Sousa R."/>
            <person name="Tripathy S.K."/>
            <person name="Magiera M.M."/>
            <person name="Zaytsev A.V."/>
            <person name="Pereira A.L."/>
            <person name="Janke C."/>
            <person name="Grishchuk E.L."/>
            <person name="Maiato H."/>
        </authorList>
    </citation>
    <scope>DETYROSINATION</scope>
</reference>
<reference key="6">
    <citation type="journal article" date="2016" name="Cell">
        <title>Graded control of microtubule severing by tubulin glutamylation.</title>
        <authorList>
            <person name="Valenstein M.L."/>
            <person name="Roll-Mecak A."/>
        </authorList>
    </citation>
    <scope>GLUTAMYLATION</scope>
</reference>
<reference key="7">
    <citation type="journal article" date="2016" name="Cell Rep.">
        <title>Alpha-tubulin tyrosination and CLIP-170 phosphorylation regulate the initiation of dynein-driven transport in neurons.</title>
        <authorList>
            <person name="Nirschl J.J."/>
            <person name="Magiera M.M."/>
            <person name="Lazarus J.E."/>
            <person name="Janke C."/>
            <person name="Holzbaur E.L."/>
        </authorList>
    </citation>
    <scope>TYROSINATION</scope>
</reference>
<reference key="8">
    <citation type="journal article" date="2017" name="Science">
        <title>Vasohibins encode tubulin detyrosinating activity.</title>
        <authorList>
            <person name="Nieuwenhuis J."/>
            <person name="Adamopoulos A."/>
            <person name="Bleijerveld O.B."/>
            <person name="Mazouzi A."/>
            <person name="Stickel E."/>
            <person name="Celie P."/>
            <person name="Altelaar M."/>
            <person name="Knipscheer P."/>
            <person name="Perrakis A."/>
            <person name="Blomen V.A."/>
            <person name="Brummelkamp T.R."/>
        </authorList>
    </citation>
    <scope>DETYROSINATION</scope>
</reference>
<reference key="9">
    <citation type="journal article" date="2022" name="Science">
        <title>Posttranslational modification of microtubules by the MATCAP detyrosinase.</title>
        <authorList>
            <person name="Landskron L."/>
            <person name="Bak J."/>
            <person name="Adamopoulos A."/>
            <person name="Kaplani K."/>
            <person name="Moraiti M."/>
            <person name="van den Hengel L.G."/>
            <person name="Song J.Y."/>
            <person name="Bleijerveld O.B."/>
            <person name="Nieuwenhuis J."/>
            <person name="Heidebrecht T."/>
            <person name="Henneman L."/>
            <person name="Moutin M.J."/>
            <person name="Barisic M."/>
            <person name="Taraviras S."/>
            <person name="Perrakis A."/>
            <person name="Brummelkamp T.R."/>
        </authorList>
    </citation>
    <scope>DETYROSINATION</scope>
</reference>
<evidence type="ECO:0000250" key="1"/>
<evidence type="ECO:0000250" key="2">
    <source>
        <dbReference type="UniProtKB" id="P05214"/>
    </source>
</evidence>
<evidence type="ECO:0000250" key="3">
    <source>
        <dbReference type="UniProtKB" id="P07437"/>
    </source>
</evidence>
<evidence type="ECO:0000250" key="4">
    <source>
        <dbReference type="UniProtKB" id="P68363"/>
    </source>
</evidence>
<evidence type="ECO:0000250" key="5">
    <source>
        <dbReference type="UniProtKB" id="P68369"/>
    </source>
</evidence>
<evidence type="ECO:0000250" key="6">
    <source>
        <dbReference type="UniProtKB" id="P68373"/>
    </source>
</evidence>
<evidence type="ECO:0000250" key="7">
    <source>
        <dbReference type="UniProtKB" id="P99024"/>
    </source>
</evidence>
<evidence type="ECO:0000250" key="8">
    <source>
        <dbReference type="UniProtKB" id="Q71U36"/>
    </source>
</evidence>
<evidence type="ECO:0000269" key="9">
    <source>
    </source>
</evidence>
<evidence type="ECO:0000269" key="10">
    <source>
    </source>
</evidence>
<evidence type="ECO:0000269" key="11">
    <source>
    </source>
</evidence>
<evidence type="ECO:0000269" key="12">
    <source>
    </source>
</evidence>
<evidence type="ECO:0000269" key="13">
    <source>
    </source>
</evidence>
<evidence type="ECO:0000269" key="14">
    <source>
    </source>
</evidence>
<evidence type="ECO:0000269" key="15">
    <source>
    </source>
</evidence>
<evidence type="ECO:0000305" key="16"/>
<evidence type="ECO:0000305" key="17">
    <source>
    </source>
</evidence>
<evidence type="ECO:0000305" key="18">
    <source>
    </source>
</evidence>
<evidence type="ECO:0000305" key="19">
    <source>
    </source>
</evidence>
<keyword id="KW-0007">Acetylation</keyword>
<keyword id="KW-0963">Cytoplasm</keyword>
<keyword id="KW-0206">Cytoskeleton</keyword>
<keyword id="KW-0342">GTP-binding</keyword>
<keyword id="KW-0378">Hydrolase</keyword>
<keyword id="KW-0460">Magnesium</keyword>
<keyword id="KW-0479">Metal-binding</keyword>
<keyword id="KW-0488">Methylation</keyword>
<keyword id="KW-0493">Microtubule</keyword>
<keyword id="KW-0944">Nitration</keyword>
<keyword id="KW-0547">Nucleotide-binding</keyword>
<keyword id="KW-0597">Phosphoprotein</keyword>
<keyword id="KW-1267">Proteomics identification</keyword>
<keyword id="KW-1185">Reference proteome</keyword>
<name>TBA3E_HUMAN</name>
<proteinExistence type="evidence at protein level"/>
<feature type="chain" id="PRO_0000293649" description="Tubulin alpha-3E chain">
    <location>
        <begin position="1"/>
        <end position="450"/>
    </location>
</feature>
<feature type="chain" id="PRO_0000437400" description="Detyrosinated tubulin alpha-3E chain" evidence="18 19">
    <location>
        <begin position="1"/>
        <end position="449"/>
    </location>
</feature>
<feature type="short sequence motif" description="MREC motif" evidence="4">
    <location>
        <begin position="1"/>
        <end position="4"/>
    </location>
</feature>
<feature type="active site" evidence="4">
    <location>
        <position position="254"/>
    </location>
</feature>
<feature type="binding site" evidence="4">
    <location>
        <position position="11"/>
    </location>
    <ligand>
        <name>GTP</name>
        <dbReference type="ChEBI" id="CHEBI:37565"/>
    </ligand>
</feature>
<feature type="binding site" evidence="4">
    <location>
        <position position="71"/>
    </location>
    <ligand>
        <name>GTP</name>
        <dbReference type="ChEBI" id="CHEBI:37565"/>
    </ligand>
</feature>
<feature type="binding site" evidence="4">
    <location>
        <position position="71"/>
    </location>
    <ligand>
        <name>Mg(2+)</name>
        <dbReference type="ChEBI" id="CHEBI:18420"/>
    </ligand>
</feature>
<feature type="binding site" evidence="4">
    <location>
        <position position="140"/>
    </location>
    <ligand>
        <name>GTP</name>
        <dbReference type="ChEBI" id="CHEBI:37565"/>
    </ligand>
</feature>
<feature type="binding site" evidence="4">
    <location>
        <position position="144"/>
    </location>
    <ligand>
        <name>GTP</name>
        <dbReference type="ChEBI" id="CHEBI:37565"/>
    </ligand>
</feature>
<feature type="binding site" evidence="4">
    <location>
        <position position="145"/>
    </location>
    <ligand>
        <name>GTP</name>
        <dbReference type="ChEBI" id="CHEBI:37565"/>
    </ligand>
</feature>
<feature type="binding site" evidence="4">
    <location>
        <position position="179"/>
    </location>
    <ligand>
        <name>GTP</name>
        <dbReference type="ChEBI" id="CHEBI:37565"/>
    </ligand>
</feature>
<feature type="binding site" evidence="4">
    <location>
        <position position="206"/>
    </location>
    <ligand>
        <name>GTP</name>
        <dbReference type="ChEBI" id="CHEBI:37565"/>
    </ligand>
</feature>
<feature type="binding site" evidence="4">
    <location>
        <position position="228"/>
    </location>
    <ligand>
        <name>GTP</name>
        <dbReference type="ChEBI" id="CHEBI:37565"/>
    </ligand>
</feature>
<feature type="site" description="Involved in polymerization" evidence="1">
    <location>
        <position position="450"/>
    </location>
</feature>
<feature type="modified residue" description="N6-acetyllysine" evidence="10">
    <location>
        <position position="40"/>
    </location>
</feature>
<feature type="modified residue" description="3'-nitrotyrosine" evidence="6">
    <location>
        <position position="282"/>
    </location>
</feature>
<feature type="modified residue" description="Phosphoserine" evidence="6">
    <location>
        <position position="439"/>
    </location>
</feature>
<feature type="modified residue" description="3'-nitrotyrosine" evidence="8">
    <location>
        <position position="450"/>
    </location>
</feature>
<feature type="sequence variant" id="VAR_052667" description="In dbSNP:rs3863907.">
    <original>S</original>
    <variation>N</variation>
    <location>
        <position position="101"/>
    </location>
</feature>
<feature type="sequence variant" id="VAR_052668" description="In dbSNP:rs13000721.">
    <original>A</original>
    <variation>V</variation>
    <location>
        <position position="126"/>
    </location>
</feature>
<feature type="sequence variant" id="VAR_054640" description="In dbSNP:rs2261398.">
    <original>S</original>
    <variation>G</variation>
    <location>
        <position position="162"/>
    </location>
</feature>
<feature type="sequence variant" id="VAR_052669" description="In dbSNP:rs1052422.">
    <original>W</original>
    <variation>R</variation>
    <location>
        <position position="402"/>
    </location>
</feature>
<feature type="sequence variant" id="VAR_054641" description="In dbSNP:rs10208844." evidence="9">
    <original>A</original>
    <variation>E</variation>
    <location>
        <position position="449"/>
    </location>
</feature>
<comment type="function">
    <text>Tubulin is the major constituent of microtubules, a cylinder consisting of laterally associated linear protofilaments composed of alpha- and beta-tubulin heterodimers. Microtubules grow by the addition of GTP-tubulin dimers to the microtubule end, where a stabilizing cap forms. Below the cap, tubulin dimers are in GDP-bound state, owing to GTPase activity of alpha-tubulin.</text>
</comment>
<comment type="catalytic activity">
    <reaction evidence="4">
        <text>GTP + H2O = GDP + phosphate + H(+)</text>
        <dbReference type="Rhea" id="RHEA:19669"/>
        <dbReference type="ChEBI" id="CHEBI:15377"/>
        <dbReference type="ChEBI" id="CHEBI:15378"/>
        <dbReference type="ChEBI" id="CHEBI:37565"/>
        <dbReference type="ChEBI" id="CHEBI:43474"/>
        <dbReference type="ChEBI" id="CHEBI:58189"/>
    </reaction>
    <physiologicalReaction direction="left-to-right" evidence="4">
        <dbReference type="Rhea" id="RHEA:19670"/>
    </physiologicalReaction>
</comment>
<comment type="cofactor">
    <cofactor evidence="4">
        <name>Mg(2+)</name>
        <dbReference type="ChEBI" id="CHEBI:18420"/>
    </cofactor>
</comment>
<comment type="subunit">
    <text>Dimer of alpha and beta chains. A typical microtubule is a hollow water-filled tube with an outer diameter of 25 nm and an inner diameter of 15 nM. Alpha-beta heterodimers associate head-to-tail to form protofilaments running lengthwise along the microtubule wall with the beta-tubulin subunit facing the microtubule plus end conferring a structural polarity. Microtubules usually have 13 protofilaments but different protofilament numbers can be found in some organisms and specialized cells.</text>
</comment>
<comment type="interaction">
    <interactant intactId="EBI-2551023">
        <id>Q6PEY2</id>
    </interactant>
    <interactant intactId="EBI-741101">
        <id>Q13643</id>
        <label>FHL3</label>
    </interactant>
    <organismsDiffer>false</organismsDiffer>
    <experiments>3</experiments>
</comment>
<comment type="interaction">
    <interactant intactId="EBI-2551023">
        <id>Q6PEY2</id>
    </interactant>
    <interactant intactId="EBI-372942">
        <id>Q13287</id>
        <label>NMI</label>
    </interactant>
    <organismsDiffer>false</organismsDiffer>
    <experiments>9</experiments>
</comment>
<comment type="interaction">
    <interactant intactId="EBI-2551023">
        <id>Q6PEY2</id>
    </interactant>
    <interactant intactId="EBI-11897462">
        <id>Q8N4U5</id>
        <label>TCP11L2</label>
    </interactant>
    <organismsDiffer>false</organismsDiffer>
    <experiments>2</experiments>
</comment>
<comment type="subcellular location">
    <subcellularLocation>
        <location evidence="1">Cytoplasm</location>
        <location evidence="1">Cytoskeleton</location>
    </subcellularLocation>
</comment>
<comment type="domain">
    <text evidence="4">The MREC motif may be critical for tubulin autoregulation.</text>
</comment>
<comment type="PTM">
    <text evidence="7 12">Some glutamate residues at the C-terminus are polyglutamylated, resulting in polyglutamate chains on the gamma-carboxyl group (PubMed:26875866). Polyglutamylation plays a key role in microtubule severing by spastin (SPAST). SPAST preferentially recognizes and acts on microtubules decorated with short polyglutamate tails: severing activity by SPAST increases as the number of glutamates per tubulin rises from one to eight, but decreases beyond this glutamylation threshold (PubMed:26875866). Glutamylation is also involved in cilia motility (By similarity).</text>
</comment>
<comment type="PTM">
    <text evidence="3 17">Some glutamate residues at the C-terminus are monoglycylated but not polyglycylated due to the absence of functional TTLL10 in human. Monoglycylation is mainly limited to tubulin incorporated into cilia and flagella axonemes, which is required for their stability and maintenance. Flagella glycylation controls sperm motility. Both polyglutamylation and monoglycylation can coexist on the same protein on adjacent residues, and lowering glycylation levels increases polyglutamylation, and reciprocally.</text>
</comment>
<comment type="PTM">
    <text evidence="10">Acetylation of alpha chains at Lys-40 is located inside the microtubule lumen. This modification has been correlated with increased microtubule stability, intracellular transport and ciliary assembly.</text>
</comment>
<comment type="PTM">
    <text evidence="4">Methylation of alpha chains at Lys-40 is found in mitotic microtubules and is required for normal mitosis and cytokinesis contributing to genomic stability.</text>
</comment>
<comment type="PTM">
    <text evidence="8">Nitration of Tyr-450 is irreversible and interferes with normal dynein intracellular distribution.</text>
</comment>
<comment type="PTM">
    <text evidence="11 13 14 15">Undergoes a tyrosination/detyrosination cycle, the cyclic removal and re-addition of a C-terminal tyrosine residue by the enzymes tubulin tyrosine carboxypeptidase (MATCAP1/KIAA0895L, VASH1 or VASH2) and tubulin tyrosine ligase (TTL), respectively.</text>
</comment>
<comment type="PTM">
    <molecule>Tubulin alpha-3E chain</molecule>
    <text evidence="5 8 13">Tyrosination promotes microtubule interaction with CAP-Gly domain-containing proteins such as CLIP1, CLIP2 and DCTN1 (By similarity). Tyrosination regulates the initiation of dynein-dynactin motility via interaction with DCTN1, which brings the dynein-dynactin complex into contact with microtubules (PubMed:26972003). In neurons, tyrosinated tubulins mediate the initiation of retrograde vesicle transport (By similarity).</text>
</comment>
<comment type="PTM">
    <molecule>Detyrosinated tubulin alpha-3E chain</molecule>
    <text evidence="2 11">Detyrosination is involved in metaphase plate congression by guiding chromosomes during mitosis: detyrosination promotes interaction with CENPE, promoting pole-proximal transport of chromosomes toward the equator (PubMed:25908662). Detyrosination increases microtubules-dependent mechanotransduction in dystrophic cardiac and skeletal muscle. In cardiomyocytes, detyrosinated microtubules are required to resist to contractile compression during contraction: detyrosination promotes association with desmin (DES) at force-generating sarcomeres, leading to buckled microtubules and mechanical resistance to contraction (By similarity).</text>
</comment>
<comment type="similarity">
    <text evidence="16">Belongs to the tubulin family.</text>
</comment>